<comment type="function">
    <text evidence="1">Catalyzes the aldol condensation of dihydroxyacetone phosphate (DHAP or glycerone-phosphate) with glyceraldehyde 3-phosphate (G3P) to form fructose 1,6-bisphosphate (FBP) in gluconeogenesis and the reverse reaction in glycolysis.</text>
</comment>
<comment type="catalytic activity">
    <reaction>
        <text>beta-D-fructose 1,6-bisphosphate = D-glyceraldehyde 3-phosphate + dihydroxyacetone phosphate</text>
        <dbReference type="Rhea" id="RHEA:14729"/>
        <dbReference type="ChEBI" id="CHEBI:32966"/>
        <dbReference type="ChEBI" id="CHEBI:57642"/>
        <dbReference type="ChEBI" id="CHEBI:59776"/>
        <dbReference type="EC" id="4.1.2.13"/>
    </reaction>
</comment>
<comment type="cofactor">
    <cofactor evidence="1">
        <name>Zn(2+)</name>
        <dbReference type="ChEBI" id="CHEBI:29105"/>
    </cofactor>
    <text evidence="1">Binds 2 Zn(2+) ions per subunit. One is catalytic and the other provides a structural contribution.</text>
</comment>
<comment type="pathway">
    <text>Carbohydrate degradation; glycolysis; D-glyceraldehyde 3-phosphate and glycerone phosphate from D-glucose: step 4/4.</text>
</comment>
<comment type="similarity">
    <text evidence="2">Belongs to the class II fructose-bisphosphate aldolase family.</text>
</comment>
<accession>P68906</accession>
<accession>P82486</accession>
<name>ALF_STRP8</name>
<dbReference type="EC" id="4.1.2.13"/>
<dbReference type="EMBL" id="AE009949">
    <property type="protein sequence ID" value="AAL98448.1"/>
    <property type="molecule type" value="Genomic_DNA"/>
</dbReference>
<dbReference type="RefSeq" id="WP_002982850.1">
    <property type="nucleotide sequence ID" value="NC_003485.1"/>
</dbReference>
<dbReference type="SMR" id="P68906"/>
<dbReference type="KEGG" id="spm:spyM18_1954"/>
<dbReference type="HOGENOM" id="CLU_040088_0_1_9"/>
<dbReference type="UniPathway" id="UPA00109">
    <property type="reaction ID" value="UER00183"/>
</dbReference>
<dbReference type="GO" id="GO:0004332">
    <property type="term" value="F:fructose-bisphosphate aldolase activity"/>
    <property type="evidence" value="ECO:0007669"/>
    <property type="project" value="UniProtKB-EC"/>
</dbReference>
<dbReference type="GO" id="GO:0008270">
    <property type="term" value="F:zinc ion binding"/>
    <property type="evidence" value="ECO:0007669"/>
    <property type="project" value="InterPro"/>
</dbReference>
<dbReference type="GO" id="GO:0030388">
    <property type="term" value="P:fructose 1,6-bisphosphate metabolic process"/>
    <property type="evidence" value="ECO:0007669"/>
    <property type="project" value="InterPro"/>
</dbReference>
<dbReference type="GO" id="GO:0006096">
    <property type="term" value="P:glycolytic process"/>
    <property type="evidence" value="ECO:0007669"/>
    <property type="project" value="UniProtKB-UniPathway"/>
</dbReference>
<dbReference type="CDD" id="cd00947">
    <property type="entry name" value="TBP_aldolase_IIB"/>
    <property type="match status" value="1"/>
</dbReference>
<dbReference type="FunFam" id="3.20.20.70:FF:000111">
    <property type="entry name" value="Fructose-1,6-bisphosphate aldolase"/>
    <property type="match status" value="1"/>
</dbReference>
<dbReference type="Gene3D" id="3.20.20.70">
    <property type="entry name" value="Aldolase class I"/>
    <property type="match status" value="1"/>
</dbReference>
<dbReference type="InterPro" id="IPR013785">
    <property type="entry name" value="Aldolase_TIM"/>
</dbReference>
<dbReference type="InterPro" id="IPR050246">
    <property type="entry name" value="Class_II_FBP_aldolase"/>
</dbReference>
<dbReference type="InterPro" id="IPR000771">
    <property type="entry name" value="FBA_II"/>
</dbReference>
<dbReference type="InterPro" id="IPR011289">
    <property type="entry name" value="Fruc_bis_ald_class-2"/>
</dbReference>
<dbReference type="NCBIfam" id="TIGR00167">
    <property type="entry name" value="cbbA"/>
    <property type="match status" value="1"/>
</dbReference>
<dbReference type="NCBIfam" id="TIGR01859">
    <property type="entry name" value="fruc_bis_ald"/>
    <property type="match status" value="1"/>
</dbReference>
<dbReference type="NCBIfam" id="NF005590">
    <property type="entry name" value="PRK07315.1"/>
    <property type="match status" value="1"/>
</dbReference>
<dbReference type="PANTHER" id="PTHR30304">
    <property type="entry name" value="D-TAGATOSE-1,6-BISPHOSPHATE ALDOLASE"/>
    <property type="match status" value="1"/>
</dbReference>
<dbReference type="PANTHER" id="PTHR30304:SF0">
    <property type="entry name" value="D-TAGATOSE-1,6-BISPHOSPHATE ALDOLASE SUBUNIT GATY-RELATED"/>
    <property type="match status" value="1"/>
</dbReference>
<dbReference type="Pfam" id="PF01116">
    <property type="entry name" value="F_bP_aldolase"/>
    <property type="match status" value="1"/>
</dbReference>
<dbReference type="PIRSF" id="PIRSF001359">
    <property type="entry name" value="F_bP_aldolase_II"/>
    <property type="match status" value="1"/>
</dbReference>
<dbReference type="SUPFAM" id="SSF51569">
    <property type="entry name" value="Aldolase"/>
    <property type="match status" value="1"/>
</dbReference>
<dbReference type="PROSITE" id="PS00602">
    <property type="entry name" value="ALDOLASE_CLASS_II_1"/>
    <property type="match status" value="1"/>
</dbReference>
<dbReference type="PROSITE" id="PS00806">
    <property type="entry name" value="ALDOLASE_CLASS_II_2"/>
    <property type="match status" value="1"/>
</dbReference>
<sequence>MAIVSAEKFVQAARENGYAVGGFNTNNLEWTQAILRAAEAKQAPVLIQTSMGAAKYMGGYKVCQSLITNLVESMGITVPVAIHLDHGHYEDALECIEVGYTSIMFDGSHLPVEENLAKTAEVVKIAHAKGVSVEAEVGTIGGEEDGIIGKGELAPIEDAKAMVETGIDFLAAGIGNIHGPYPENWEGLALDHLEKLTAAVPGFPIVLHGGSGIPDDQIKEAIRLGVAKVNVNTESQIAFSNATREFARNYEANEAEYDGKKLFDPRKFLAPGMKAVQGAVEERIDVFGSANKA</sequence>
<gene>
    <name type="primary">fba</name>
    <name type="ordered locus">spyM18_1954</name>
</gene>
<protein>
    <recommendedName>
        <fullName>Fructose-bisphosphate aldolase</fullName>
        <shortName>FBP aldolase</shortName>
        <shortName>FBPA</shortName>
        <ecNumber>4.1.2.13</ecNumber>
    </recommendedName>
    <alternativeName>
        <fullName>Fructose-1,6-bisphosphate aldolase</fullName>
    </alternativeName>
</protein>
<evidence type="ECO:0000250" key="1"/>
<evidence type="ECO:0000305" key="2"/>
<keyword id="KW-0324">Glycolysis</keyword>
<keyword id="KW-0456">Lyase</keyword>
<keyword id="KW-0479">Metal-binding</keyword>
<keyword id="KW-0862">Zinc</keyword>
<proteinExistence type="inferred from homology"/>
<feature type="initiator methionine" description="Removed" evidence="1">
    <location>
        <position position="1"/>
    </location>
</feature>
<feature type="chain" id="PRO_0000178750" description="Fructose-bisphosphate aldolase">
    <location>
        <begin position="2"/>
        <end position="293"/>
    </location>
</feature>
<feature type="active site" description="Proton donor" evidence="1">
    <location>
        <position position="85"/>
    </location>
</feature>
<feature type="binding site" evidence="1">
    <location>
        <position position="50"/>
    </location>
    <ligand>
        <name>D-glyceraldehyde 3-phosphate</name>
        <dbReference type="ChEBI" id="CHEBI:59776"/>
    </ligand>
</feature>
<feature type="binding site" evidence="1">
    <location>
        <position position="86"/>
    </location>
    <ligand>
        <name>Zn(2+)</name>
        <dbReference type="ChEBI" id="CHEBI:29105"/>
        <label>1</label>
        <note>catalytic</note>
    </ligand>
</feature>
<feature type="binding site" evidence="1">
    <location>
        <position position="106"/>
    </location>
    <ligand>
        <name>Zn(2+)</name>
        <dbReference type="ChEBI" id="CHEBI:29105"/>
        <label>2</label>
    </ligand>
</feature>
<feature type="binding site" evidence="1">
    <location>
        <position position="136"/>
    </location>
    <ligand>
        <name>Zn(2+)</name>
        <dbReference type="ChEBI" id="CHEBI:29105"/>
        <label>2</label>
    </ligand>
</feature>
<feature type="binding site" evidence="1">
    <location>
        <position position="178"/>
    </location>
    <ligand>
        <name>Zn(2+)</name>
        <dbReference type="ChEBI" id="CHEBI:29105"/>
        <label>1</label>
        <note>catalytic</note>
    </ligand>
</feature>
<feature type="binding site" evidence="1">
    <location>
        <position position="179"/>
    </location>
    <ligand>
        <name>dihydroxyacetone phosphate</name>
        <dbReference type="ChEBI" id="CHEBI:57642"/>
    </ligand>
</feature>
<feature type="binding site" evidence="1">
    <location>
        <position position="208"/>
    </location>
    <ligand>
        <name>Zn(2+)</name>
        <dbReference type="ChEBI" id="CHEBI:29105"/>
        <label>1</label>
        <note>catalytic</note>
    </ligand>
</feature>
<feature type="binding site" evidence="1">
    <location>
        <begin position="209"/>
        <end position="211"/>
    </location>
    <ligand>
        <name>dihydroxyacetone phosphate</name>
        <dbReference type="ChEBI" id="CHEBI:57642"/>
    </ligand>
</feature>
<feature type="binding site" evidence="1">
    <location>
        <begin position="230"/>
        <end position="233"/>
    </location>
    <ligand>
        <name>dihydroxyacetone phosphate</name>
        <dbReference type="ChEBI" id="CHEBI:57642"/>
    </ligand>
</feature>
<reference key="1">
    <citation type="journal article" date="2002" name="Proc. Natl. Acad. Sci. U.S.A.">
        <title>Genome sequence and comparative microarray analysis of serotype M18 group A Streptococcus strains associated with acute rheumatic fever outbreaks.</title>
        <authorList>
            <person name="Smoot J.C."/>
            <person name="Barbian K.D."/>
            <person name="Van Gompel J.J."/>
            <person name="Smoot L.M."/>
            <person name="Chaussee M.S."/>
            <person name="Sylva G.L."/>
            <person name="Sturdevant D.E."/>
            <person name="Ricklefs S.M."/>
            <person name="Porcella S.F."/>
            <person name="Parkins L.D."/>
            <person name="Beres S.B."/>
            <person name="Campbell D.S."/>
            <person name="Smith T.M."/>
            <person name="Zhang Q."/>
            <person name="Kapur V."/>
            <person name="Daly J.A."/>
            <person name="Veasy L.G."/>
            <person name="Musser J.M."/>
        </authorList>
    </citation>
    <scope>NUCLEOTIDE SEQUENCE [LARGE SCALE GENOMIC DNA]</scope>
    <source>
        <strain>MGAS8232</strain>
    </source>
</reference>
<organism>
    <name type="scientific">Streptococcus pyogenes serotype M18 (strain MGAS8232)</name>
    <dbReference type="NCBI Taxonomy" id="186103"/>
    <lineage>
        <taxon>Bacteria</taxon>
        <taxon>Bacillati</taxon>
        <taxon>Bacillota</taxon>
        <taxon>Bacilli</taxon>
        <taxon>Lactobacillales</taxon>
        <taxon>Streptococcaceae</taxon>
        <taxon>Streptococcus</taxon>
    </lineage>
</organism>